<protein>
    <recommendedName>
        <fullName evidence="1">Beta-ketoacyl-[acyl-carrier-protein] synthase III</fullName>
        <shortName evidence="1">Beta-ketoacyl-ACP synthase III</shortName>
        <shortName evidence="1">KAS III</shortName>
        <ecNumber evidence="1">2.3.1.180</ecNumber>
    </recommendedName>
    <alternativeName>
        <fullName evidence="1">3-oxoacyl-[acyl-carrier-protein] synthase 3</fullName>
    </alternativeName>
    <alternativeName>
        <fullName evidence="1">3-oxoacyl-[acyl-carrier-protein] synthase III</fullName>
    </alternativeName>
</protein>
<name>FABH_CLOAB</name>
<organism>
    <name type="scientific">Clostridium acetobutylicum (strain ATCC 824 / DSM 792 / JCM 1419 / IAM 19013 / LMG 5710 / NBRC 13948 / NRRL B-527 / VKM B-1787 / 2291 / W)</name>
    <dbReference type="NCBI Taxonomy" id="272562"/>
    <lineage>
        <taxon>Bacteria</taxon>
        <taxon>Bacillati</taxon>
        <taxon>Bacillota</taxon>
        <taxon>Clostridia</taxon>
        <taxon>Eubacteriales</taxon>
        <taxon>Clostridiaceae</taxon>
        <taxon>Clostridium</taxon>
    </lineage>
</organism>
<proteinExistence type="inferred from homology"/>
<feature type="chain" id="PRO_0000110418" description="Beta-ketoacyl-[acyl-carrier-protein] synthase III">
    <location>
        <begin position="1"/>
        <end position="325"/>
    </location>
</feature>
<feature type="region of interest" description="ACP-binding" evidence="1">
    <location>
        <begin position="251"/>
        <end position="255"/>
    </location>
</feature>
<feature type="active site" evidence="1">
    <location>
        <position position="112"/>
    </location>
</feature>
<feature type="active site" evidence="1">
    <location>
        <position position="250"/>
    </location>
</feature>
<feature type="active site" evidence="1">
    <location>
        <position position="280"/>
    </location>
</feature>
<keyword id="KW-0012">Acyltransferase</keyword>
<keyword id="KW-0963">Cytoplasm</keyword>
<keyword id="KW-0275">Fatty acid biosynthesis</keyword>
<keyword id="KW-0276">Fatty acid metabolism</keyword>
<keyword id="KW-0444">Lipid biosynthesis</keyword>
<keyword id="KW-0443">Lipid metabolism</keyword>
<keyword id="KW-0511">Multifunctional enzyme</keyword>
<keyword id="KW-1185">Reference proteome</keyword>
<keyword id="KW-0808">Transferase</keyword>
<sequence length="325" mass="34928">MNSVEIIGTGSYVPEKIVTNEDMSKIVDTSDEWISSRTGIKERRISINENTSDLGAKAALRAIEDSNIKPEEIDLIIVATTSPDSYTPSVACIVQEKIGAKNAACFDLNAACTGFIFALNTASQFIKTGEYKTALVVGTEVLSKILDWQDRGTCVLFGDGAGAVIIRGGDENGIIKACLGSDGTGKDFLHCPATNVINPFSDEKGLASSKISMNGREVFKFAVKVMVSSVKKVIEDSGLNIEDIDYIVPHQANIRIIEFAAKKLGLSMDKFFINLQNYGNTSGATIPLAIDEMNKKGLLKRGAKIVVVGFGGGLTWGSMVLKWTK</sequence>
<evidence type="ECO:0000255" key="1">
    <source>
        <dbReference type="HAMAP-Rule" id="MF_01815"/>
    </source>
</evidence>
<dbReference type="EC" id="2.3.1.180" evidence="1"/>
<dbReference type="EMBL" id="AE001437">
    <property type="protein sequence ID" value="AAK81501.1"/>
    <property type="molecule type" value="Genomic_DNA"/>
</dbReference>
<dbReference type="PIR" id="B97339">
    <property type="entry name" value="B97339"/>
</dbReference>
<dbReference type="RefSeq" id="NP_350161.1">
    <property type="nucleotide sequence ID" value="NC_003030.1"/>
</dbReference>
<dbReference type="RefSeq" id="WP_010966841.1">
    <property type="nucleotide sequence ID" value="NC_003030.1"/>
</dbReference>
<dbReference type="SMR" id="Q97DA2"/>
<dbReference type="STRING" id="272562.CA_C3578"/>
<dbReference type="KEGG" id="cac:CA_C3578"/>
<dbReference type="PATRIC" id="fig|272562.8.peg.3767"/>
<dbReference type="eggNOG" id="COG0332">
    <property type="taxonomic scope" value="Bacteria"/>
</dbReference>
<dbReference type="HOGENOM" id="CLU_039592_3_1_9"/>
<dbReference type="OrthoDB" id="9815506at2"/>
<dbReference type="UniPathway" id="UPA00094"/>
<dbReference type="Proteomes" id="UP000000814">
    <property type="component" value="Chromosome"/>
</dbReference>
<dbReference type="GO" id="GO:0005737">
    <property type="term" value="C:cytoplasm"/>
    <property type="evidence" value="ECO:0007669"/>
    <property type="project" value="UniProtKB-SubCell"/>
</dbReference>
<dbReference type="GO" id="GO:0004315">
    <property type="term" value="F:3-oxoacyl-[acyl-carrier-protein] synthase activity"/>
    <property type="evidence" value="ECO:0007669"/>
    <property type="project" value="InterPro"/>
</dbReference>
<dbReference type="GO" id="GO:0033818">
    <property type="term" value="F:beta-ketoacyl-acyl-carrier-protein synthase III activity"/>
    <property type="evidence" value="ECO:0007669"/>
    <property type="project" value="UniProtKB-UniRule"/>
</dbReference>
<dbReference type="GO" id="GO:0006633">
    <property type="term" value="P:fatty acid biosynthetic process"/>
    <property type="evidence" value="ECO:0007669"/>
    <property type="project" value="UniProtKB-UniRule"/>
</dbReference>
<dbReference type="CDD" id="cd00830">
    <property type="entry name" value="KAS_III"/>
    <property type="match status" value="1"/>
</dbReference>
<dbReference type="FunFam" id="3.40.47.10:FF:000004">
    <property type="entry name" value="3-oxoacyl-[acyl-carrier-protein] synthase 3"/>
    <property type="match status" value="1"/>
</dbReference>
<dbReference type="Gene3D" id="3.40.47.10">
    <property type="match status" value="1"/>
</dbReference>
<dbReference type="HAMAP" id="MF_01815">
    <property type="entry name" value="FabH"/>
    <property type="match status" value="1"/>
</dbReference>
<dbReference type="InterPro" id="IPR013747">
    <property type="entry name" value="ACP_syn_III_C"/>
</dbReference>
<dbReference type="InterPro" id="IPR013751">
    <property type="entry name" value="ACP_syn_III_N"/>
</dbReference>
<dbReference type="InterPro" id="IPR004655">
    <property type="entry name" value="FabH"/>
</dbReference>
<dbReference type="InterPro" id="IPR016039">
    <property type="entry name" value="Thiolase-like"/>
</dbReference>
<dbReference type="NCBIfam" id="TIGR00747">
    <property type="entry name" value="fabH"/>
    <property type="match status" value="1"/>
</dbReference>
<dbReference type="NCBIfam" id="NF006829">
    <property type="entry name" value="PRK09352.1"/>
    <property type="match status" value="1"/>
</dbReference>
<dbReference type="PANTHER" id="PTHR43091">
    <property type="entry name" value="3-OXOACYL-[ACYL-CARRIER-PROTEIN] SYNTHASE"/>
    <property type="match status" value="1"/>
</dbReference>
<dbReference type="PANTHER" id="PTHR43091:SF1">
    <property type="entry name" value="BETA-KETOACYL-[ACYL-CARRIER-PROTEIN] SYNTHASE III, CHLOROPLASTIC"/>
    <property type="match status" value="1"/>
</dbReference>
<dbReference type="Pfam" id="PF08545">
    <property type="entry name" value="ACP_syn_III"/>
    <property type="match status" value="1"/>
</dbReference>
<dbReference type="Pfam" id="PF08541">
    <property type="entry name" value="ACP_syn_III_C"/>
    <property type="match status" value="1"/>
</dbReference>
<dbReference type="SUPFAM" id="SSF53901">
    <property type="entry name" value="Thiolase-like"/>
    <property type="match status" value="1"/>
</dbReference>
<gene>
    <name evidence="1" type="primary">fabH</name>
    <name type="ordered locus">CA_C3578</name>
</gene>
<reference key="1">
    <citation type="journal article" date="2001" name="J. Bacteriol.">
        <title>Genome sequence and comparative analysis of the solvent-producing bacterium Clostridium acetobutylicum.</title>
        <authorList>
            <person name="Noelling J."/>
            <person name="Breton G."/>
            <person name="Omelchenko M.V."/>
            <person name="Makarova K.S."/>
            <person name="Zeng Q."/>
            <person name="Gibson R."/>
            <person name="Lee H.M."/>
            <person name="Dubois J."/>
            <person name="Qiu D."/>
            <person name="Hitti J."/>
            <person name="Wolf Y.I."/>
            <person name="Tatusov R.L."/>
            <person name="Sabathe F."/>
            <person name="Doucette-Stamm L.A."/>
            <person name="Soucaille P."/>
            <person name="Daly M.J."/>
            <person name="Bennett G.N."/>
            <person name="Koonin E.V."/>
            <person name="Smith D.R."/>
        </authorList>
    </citation>
    <scope>NUCLEOTIDE SEQUENCE [LARGE SCALE GENOMIC DNA]</scope>
    <source>
        <strain>ATCC 824 / DSM 792 / JCM 1419 / IAM 19013 / LMG 5710 / NBRC 13948 / NRRL B-527 / VKM B-1787 / 2291 / W</strain>
    </source>
</reference>
<comment type="function">
    <text evidence="1">Catalyzes the condensation reaction of fatty acid synthesis by the addition to an acyl acceptor of two carbons from malonyl-ACP. Catalyzes the first condensation reaction which initiates fatty acid synthesis and may therefore play a role in governing the total rate of fatty acid production. Possesses both acetoacetyl-ACP synthase and acetyl transacylase activities. Its substrate specificity determines the biosynthesis of branched-chain and/or straight-chain of fatty acids.</text>
</comment>
<comment type="catalytic activity">
    <reaction evidence="1">
        <text>malonyl-[ACP] + acetyl-CoA + H(+) = 3-oxobutanoyl-[ACP] + CO2 + CoA</text>
        <dbReference type="Rhea" id="RHEA:12080"/>
        <dbReference type="Rhea" id="RHEA-COMP:9623"/>
        <dbReference type="Rhea" id="RHEA-COMP:9625"/>
        <dbReference type="ChEBI" id="CHEBI:15378"/>
        <dbReference type="ChEBI" id="CHEBI:16526"/>
        <dbReference type="ChEBI" id="CHEBI:57287"/>
        <dbReference type="ChEBI" id="CHEBI:57288"/>
        <dbReference type="ChEBI" id="CHEBI:78449"/>
        <dbReference type="ChEBI" id="CHEBI:78450"/>
        <dbReference type="EC" id="2.3.1.180"/>
    </reaction>
</comment>
<comment type="pathway">
    <text evidence="1">Lipid metabolism; fatty acid biosynthesis.</text>
</comment>
<comment type="subunit">
    <text evidence="1">Homodimer.</text>
</comment>
<comment type="subcellular location">
    <subcellularLocation>
        <location evidence="1">Cytoplasm</location>
    </subcellularLocation>
</comment>
<comment type="domain">
    <text evidence="1">The last Arg residue of the ACP-binding site is essential for the weak association between ACP/AcpP and FabH.</text>
</comment>
<comment type="similarity">
    <text evidence="1">Belongs to the thiolase-like superfamily. FabH family.</text>
</comment>
<accession>Q97DA2</accession>